<keyword id="KW-0963">Cytoplasm</keyword>
<gene>
    <name type="ordered locus">YpAngola_A1486</name>
</gene>
<evidence type="ECO:0000255" key="1">
    <source>
        <dbReference type="HAMAP-Rule" id="MF_00730"/>
    </source>
</evidence>
<accession>A9R3I2</accession>
<feature type="chain" id="PRO_1000132737" description="Nucleoid-associated protein YpAngola_A1486">
    <location>
        <begin position="1"/>
        <end position="334"/>
    </location>
</feature>
<protein>
    <recommendedName>
        <fullName evidence="1">Nucleoid-associated protein YpAngola_A1486</fullName>
    </recommendedName>
</protein>
<organism>
    <name type="scientific">Yersinia pestis bv. Antiqua (strain Angola)</name>
    <dbReference type="NCBI Taxonomy" id="349746"/>
    <lineage>
        <taxon>Bacteria</taxon>
        <taxon>Pseudomonadati</taxon>
        <taxon>Pseudomonadota</taxon>
        <taxon>Gammaproteobacteria</taxon>
        <taxon>Enterobacterales</taxon>
        <taxon>Yersiniaceae</taxon>
        <taxon>Yersinia</taxon>
    </lineage>
</organism>
<comment type="subcellular location">
    <subcellularLocation>
        <location evidence="1">Cytoplasm</location>
        <location evidence="1">Nucleoid</location>
    </subcellularLocation>
</comment>
<comment type="similarity">
    <text evidence="1">Belongs to the YejK family.</text>
</comment>
<proteinExistence type="inferred from homology"/>
<name>NDPA_YERPG</name>
<sequence length="334" mass="37740">MSLDIDQIALHQLIKRDEQTLDVVLRDSLLPTNAVVEEMMAELHRVYSAKSKAYGLFNEQSELADALKRSRKGDEDFLSFSRAATGRLRDELAKYPFAEGGVVLFCQYRYLAVEYLLISVLSSCHSMRVNEQLDLSTTHYLDINRADIVARIDLTEWETNPESTRYLTFLKGRVGRKVSDFFMDFLSAAEGLDTKAQNRGLLQAVDDYCADAELGKNERQAYRQQVYSYCNEQLQAGEEIALQVLAQELPKLGEKDFQQFSAEQGYALEESFPADRGTLRQLTKFAGSGGGLSINFDALLLDERIFWDAATDTLTIKGTPPNLRDQLQRRAGSK</sequence>
<reference key="1">
    <citation type="journal article" date="2010" name="J. Bacteriol.">
        <title>Genome sequence of the deep-rooted Yersinia pestis strain Angola reveals new insights into the evolution and pangenome of the plague bacterium.</title>
        <authorList>
            <person name="Eppinger M."/>
            <person name="Worsham P.L."/>
            <person name="Nikolich M.P."/>
            <person name="Riley D.R."/>
            <person name="Sebastian Y."/>
            <person name="Mou S."/>
            <person name="Achtman M."/>
            <person name="Lindler L.E."/>
            <person name="Ravel J."/>
        </authorList>
    </citation>
    <scope>NUCLEOTIDE SEQUENCE [LARGE SCALE GENOMIC DNA]</scope>
    <source>
        <strain>Angola</strain>
    </source>
</reference>
<dbReference type="EMBL" id="CP000901">
    <property type="protein sequence ID" value="ABX85373.1"/>
    <property type="molecule type" value="Genomic_DNA"/>
</dbReference>
<dbReference type="SMR" id="A9R3I2"/>
<dbReference type="KEGG" id="ypg:YpAngola_A1486"/>
<dbReference type="PATRIC" id="fig|349746.12.peg.2452"/>
<dbReference type="GO" id="GO:0043590">
    <property type="term" value="C:bacterial nucleoid"/>
    <property type="evidence" value="ECO:0007669"/>
    <property type="project" value="TreeGrafter"/>
</dbReference>
<dbReference type="GO" id="GO:0005737">
    <property type="term" value="C:cytoplasm"/>
    <property type="evidence" value="ECO:0007669"/>
    <property type="project" value="UniProtKB-UniRule"/>
</dbReference>
<dbReference type="GO" id="GO:0003690">
    <property type="term" value="F:double-stranded DNA binding"/>
    <property type="evidence" value="ECO:0007669"/>
    <property type="project" value="TreeGrafter"/>
</dbReference>
<dbReference type="GO" id="GO:0003727">
    <property type="term" value="F:single-stranded RNA binding"/>
    <property type="evidence" value="ECO:0007669"/>
    <property type="project" value="TreeGrafter"/>
</dbReference>
<dbReference type="HAMAP" id="MF_00730">
    <property type="entry name" value="NdpA"/>
    <property type="match status" value="1"/>
</dbReference>
<dbReference type="InterPro" id="IPR007358">
    <property type="entry name" value="Nucleoid_associated_NdpA"/>
</dbReference>
<dbReference type="NCBIfam" id="NF001557">
    <property type="entry name" value="PRK00378.1"/>
    <property type="match status" value="1"/>
</dbReference>
<dbReference type="PANTHER" id="PTHR38772">
    <property type="match status" value="1"/>
</dbReference>
<dbReference type="PANTHER" id="PTHR38772:SF1">
    <property type="entry name" value="NUCLEOID-ASSOCIATED PROTEIN YEJK"/>
    <property type="match status" value="1"/>
</dbReference>
<dbReference type="Pfam" id="PF04245">
    <property type="entry name" value="NA37"/>
    <property type="match status" value="1"/>
</dbReference>